<name>SOMA_KATPE</name>
<feature type="chain" id="PRO_0000181336" description="Somatotropin">
    <location>
        <begin position="1"/>
        <end position="185"/>
    </location>
</feature>
<feature type="binding site" evidence="1">
    <location>
        <position position="167"/>
    </location>
    <ligand>
        <name>Zn(2+)</name>
        <dbReference type="ChEBI" id="CHEBI:29105"/>
    </ligand>
</feature>
<feature type="disulfide bond" evidence="1">
    <location>
        <begin position="52"/>
        <end position="158"/>
    </location>
</feature>
<feature type="disulfide bond" evidence="1">
    <location>
        <begin position="175"/>
        <end position="183"/>
    </location>
</feature>
<reference key="1">
    <citation type="journal article" date="1988" name="Int. J. Pept. Protein Res.">
        <title>Isolation and characterization of growth hormone from a marine fish, bonito (Katsuwonus pelamis).</title>
        <authorList>
            <person name="Noso T."/>
            <person name="Yasuda A."/>
            <person name="Kawazoe I."/>
            <person name="Takehara H."/>
            <person name="Takahasi A."/>
            <person name="Sakai K."/>
            <person name="Kawauchi H."/>
        </authorList>
    </citation>
    <scope>PROTEIN SEQUENCE</scope>
</reference>
<accession>P20391</accession>
<comment type="function">
    <text>Growth hormone plays an important role in growth control and is involved in the regulation of several anabolic processes. Implicated as an osmoregulatory substance important for seawater adaptation.</text>
</comment>
<comment type="subcellular location">
    <subcellularLocation>
        <location>Secreted</location>
    </subcellularLocation>
</comment>
<comment type="similarity">
    <text evidence="2">Belongs to the somatotropin/prolactin family.</text>
</comment>
<gene>
    <name type="primary">gh</name>
</gene>
<keyword id="KW-0903">Direct protein sequencing</keyword>
<keyword id="KW-1015">Disulfide bond</keyword>
<keyword id="KW-0372">Hormone</keyword>
<keyword id="KW-0479">Metal-binding</keyword>
<keyword id="KW-0964">Secreted</keyword>
<keyword id="KW-0862">Zinc</keyword>
<organism>
    <name type="scientific">Katsuwonus pelamis</name>
    <name type="common">Skipjack tuna</name>
    <name type="synonym">Scomber pelamis</name>
    <dbReference type="NCBI Taxonomy" id="8226"/>
    <lineage>
        <taxon>Eukaryota</taxon>
        <taxon>Metazoa</taxon>
        <taxon>Chordata</taxon>
        <taxon>Craniata</taxon>
        <taxon>Vertebrata</taxon>
        <taxon>Euteleostomi</taxon>
        <taxon>Actinopterygii</taxon>
        <taxon>Neopterygii</taxon>
        <taxon>Teleostei</taxon>
        <taxon>Neoteleostei</taxon>
        <taxon>Acanthomorphata</taxon>
        <taxon>Pelagiaria</taxon>
        <taxon>Scombriformes</taxon>
        <taxon>Scombridae</taxon>
        <taxon>Katsuwonus</taxon>
    </lineage>
</organism>
<evidence type="ECO:0000250" key="1"/>
<evidence type="ECO:0000305" key="2"/>
<dbReference type="PIR" id="JK0021">
    <property type="entry name" value="JK0021"/>
</dbReference>
<dbReference type="SMR" id="P20391"/>
<dbReference type="GO" id="GO:0005615">
    <property type="term" value="C:extracellular space"/>
    <property type="evidence" value="ECO:0007669"/>
    <property type="project" value="InterPro"/>
</dbReference>
<dbReference type="GO" id="GO:0070186">
    <property type="term" value="F:growth hormone activity"/>
    <property type="evidence" value="ECO:0007669"/>
    <property type="project" value="TreeGrafter"/>
</dbReference>
<dbReference type="GO" id="GO:0005131">
    <property type="term" value="F:growth hormone receptor binding"/>
    <property type="evidence" value="ECO:0007669"/>
    <property type="project" value="InterPro"/>
</dbReference>
<dbReference type="GO" id="GO:0046872">
    <property type="term" value="F:metal ion binding"/>
    <property type="evidence" value="ECO:0007669"/>
    <property type="project" value="UniProtKB-KW"/>
</dbReference>
<dbReference type="GO" id="GO:0048513">
    <property type="term" value="P:animal organ development"/>
    <property type="evidence" value="ECO:0007669"/>
    <property type="project" value="TreeGrafter"/>
</dbReference>
<dbReference type="GO" id="GO:0060396">
    <property type="term" value="P:growth hormone receptor signaling pathway"/>
    <property type="evidence" value="ECO:0007669"/>
    <property type="project" value="TreeGrafter"/>
</dbReference>
<dbReference type="GO" id="GO:0045927">
    <property type="term" value="P:positive regulation of growth"/>
    <property type="evidence" value="ECO:0007669"/>
    <property type="project" value="TreeGrafter"/>
</dbReference>
<dbReference type="GO" id="GO:0046427">
    <property type="term" value="P:positive regulation of receptor signaling pathway via JAK-STAT"/>
    <property type="evidence" value="ECO:0007669"/>
    <property type="project" value="TreeGrafter"/>
</dbReference>
<dbReference type="GO" id="GO:0031667">
    <property type="term" value="P:response to nutrient levels"/>
    <property type="evidence" value="ECO:0007669"/>
    <property type="project" value="TreeGrafter"/>
</dbReference>
<dbReference type="CDD" id="cd10285">
    <property type="entry name" value="somatotropin_like"/>
    <property type="match status" value="1"/>
</dbReference>
<dbReference type="FunFam" id="1.20.1250.10:FF:000009">
    <property type="entry name" value="Growth hormone"/>
    <property type="match status" value="1"/>
</dbReference>
<dbReference type="Gene3D" id="1.20.1250.10">
    <property type="match status" value="1"/>
</dbReference>
<dbReference type="InterPro" id="IPR009079">
    <property type="entry name" value="4_helix_cytokine-like_core"/>
</dbReference>
<dbReference type="InterPro" id="IPR034975">
    <property type="entry name" value="Somatotropin"/>
</dbReference>
<dbReference type="InterPro" id="IPR001400">
    <property type="entry name" value="Somatotropin/Prolactin"/>
</dbReference>
<dbReference type="InterPro" id="IPR018116">
    <property type="entry name" value="Somatotropin_CS"/>
</dbReference>
<dbReference type="PANTHER" id="PTHR11417:SF2">
    <property type="entry name" value="SOMATOTROPIN"/>
    <property type="match status" value="1"/>
</dbReference>
<dbReference type="PANTHER" id="PTHR11417">
    <property type="entry name" value="SOMATOTROPIN,PROLACTIN"/>
    <property type="match status" value="1"/>
</dbReference>
<dbReference type="Pfam" id="PF00103">
    <property type="entry name" value="Hormone_1"/>
    <property type="match status" value="1"/>
</dbReference>
<dbReference type="PRINTS" id="PR00836">
    <property type="entry name" value="SOMATOTROPIN"/>
</dbReference>
<dbReference type="SUPFAM" id="SSF47266">
    <property type="entry name" value="4-helical cytokines"/>
    <property type="match status" value="1"/>
</dbReference>
<dbReference type="PROSITE" id="PS00266">
    <property type="entry name" value="SOMATOTROPIN_1"/>
    <property type="match status" value="1"/>
</dbReference>
<dbReference type="PROSITE" id="PS00338">
    <property type="entry name" value="SOMATOTROPIN_2"/>
    <property type="match status" value="1"/>
</dbReference>
<proteinExistence type="evidence at protein level"/>
<protein>
    <recommendedName>
        <fullName>Somatotropin</fullName>
    </recommendedName>
    <alternativeName>
        <fullName>Growth hormone</fullName>
    </alternativeName>
</protein>
<sequence length="185" mass="21235">QPITESQRLFSIAVSRVQNLHLLAQRLFSDFESSLQTQEQRQLNKIFLQDFCNSDYIISPIDKHETQRSSVLKLLSISYRLVESWEFPSRSLSGAQRNQISEKLSDLKMGIQLLIRANQDGAEMFADSSALQLAPYGNYYQSLGGDESLRRNYELLACFKKDMHKVETYLMVAKCRLSPEANCTL</sequence>